<comment type="catalytic activity">
    <reaction evidence="1">
        <text>tRNA(Leu) + L-leucine + ATP = L-leucyl-tRNA(Leu) + AMP + diphosphate</text>
        <dbReference type="Rhea" id="RHEA:11688"/>
        <dbReference type="Rhea" id="RHEA-COMP:9613"/>
        <dbReference type="Rhea" id="RHEA-COMP:9622"/>
        <dbReference type="ChEBI" id="CHEBI:30616"/>
        <dbReference type="ChEBI" id="CHEBI:33019"/>
        <dbReference type="ChEBI" id="CHEBI:57427"/>
        <dbReference type="ChEBI" id="CHEBI:78442"/>
        <dbReference type="ChEBI" id="CHEBI:78494"/>
        <dbReference type="ChEBI" id="CHEBI:456215"/>
        <dbReference type="EC" id="6.1.1.4"/>
    </reaction>
</comment>
<comment type="subcellular location">
    <subcellularLocation>
        <location evidence="1">Cytoplasm</location>
    </subcellularLocation>
</comment>
<comment type="similarity">
    <text evidence="1">Belongs to the class-I aminoacyl-tRNA synthetase family.</text>
</comment>
<reference key="1">
    <citation type="journal article" date="2003" name="Nat. Genet.">
        <title>Comparative analysis of the genome sequences of Bordetella pertussis, Bordetella parapertussis and Bordetella bronchiseptica.</title>
        <authorList>
            <person name="Parkhill J."/>
            <person name="Sebaihia M."/>
            <person name="Preston A."/>
            <person name="Murphy L.D."/>
            <person name="Thomson N.R."/>
            <person name="Harris D.E."/>
            <person name="Holden M.T.G."/>
            <person name="Churcher C.M."/>
            <person name="Bentley S.D."/>
            <person name="Mungall K.L."/>
            <person name="Cerdeno-Tarraga A.-M."/>
            <person name="Temple L."/>
            <person name="James K.D."/>
            <person name="Harris B."/>
            <person name="Quail M.A."/>
            <person name="Achtman M."/>
            <person name="Atkin R."/>
            <person name="Baker S."/>
            <person name="Basham D."/>
            <person name="Bason N."/>
            <person name="Cherevach I."/>
            <person name="Chillingworth T."/>
            <person name="Collins M."/>
            <person name="Cronin A."/>
            <person name="Davis P."/>
            <person name="Doggett J."/>
            <person name="Feltwell T."/>
            <person name="Goble A."/>
            <person name="Hamlin N."/>
            <person name="Hauser H."/>
            <person name="Holroyd S."/>
            <person name="Jagels K."/>
            <person name="Leather S."/>
            <person name="Moule S."/>
            <person name="Norberczak H."/>
            <person name="O'Neil S."/>
            <person name="Ormond D."/>
            <person name="Price C."/>
            <person name="Rabbinowitsch E."/>
            <person name="Rutter S."/>
            <person name="Sanders M."/>
            <person name="Saunders D."/>
            <person name="Seeger K."/>
            <person name="Sharp S."/>
            <person name="Simmonds M."/>
            <person name="Skelton J."/>
            <person name="Squares R."/>
            <person name="Squares S."/>
            <person name="Stevens K."/>
            <person name="Unwin L."/>
            <person name="Whitehead S."/>
            <person name="Barrell B.G."/>
            <person name="Maskell D.J."/>
        </authorList>
    </citation>
    <scope>NUCLEOTIDE SEQUENCE [LARGE SCALE GENOMIC DNA]</scope>
    <source>
        <strain>Tohama I / ATCC BAA-589 / NCTC 13251</strain>
    </source>
</reference>
<dbReference type="EC" id="6.1.1.4" evidence="1"/>
<dbReference type="EMBL" id="BX640417">
    <property type="protein sequence ID" value="CAE42323.1"/>
    <property type="molecule type" value="Genomic_DNA"/>
</dbReference>
<dbReference type="RefSeq" id="NP_880711.1">
    <property type="nucleotide sequence ID" value="NC_002929.2"/>
</dbReference>
<dbReference type="RefSeq" id="WP_003818515.1">
    <property type="nucleotide sequence ID" value="NZ_CP039022.1"/>
</dbReference>
<dbReference type="SMR" id="Q7VWY7"/>
<dbReference type="STRING" id="257313.BP2044"/>
<dbReference type="PaxDb" id="257313-BP2044"/>
<dbReference type="GeneID" id="69601813"/>
<dbReference type="KEGG" id="bpe:BP2044"/>
<dbReference type="PATRIC" id="fig|257313.5.peg.2196"/>
<dbReference type="eggNOG" id="COG0495">
    <property type="taxonomic scope" value="Bacteria"/>
</dbReference>
<dbReference type="HOGENOM" id="CLU_004427_0_0_4"/>
<dbReference type="Proteomes" id="UP000002676">
    <property type="component" value="Chromosome"/>
</dbReference>
<dbReference type="GO" id="GO:0005829">
    <property type="term" value="C:cytosol"/>
    <property type="evidence" value="ECO:0007669"/>
    <property type="project" value="TreeGrafter"/>
</dbReference>
<dbReference type="GO" id="GO:0002161">
    <property type="term" value="F:aminoacyl-tRNA deacylase activity"/>
    <property type="evidence" value="ECO:0007669"/>
    <property type="project" value="InterPro"/>
</dbReference>
<dbReference type="GO" id="GO:0005524">
    <property type="term" value="F:ATP binding"/>
    <property type="evidence" value="ECO:0007669"/>
    <property type="project" value="UniProtKB-UniRule"/>
</dbReference>
<dbReference type="GO" id="GO:0004823">
    <property type="term" value="F:leucine-tRNA ligase activity"/>
    <property type="evidence" value="ECO:0007669"/>
    <property type="project" value="UniProtKB-UniRule"/>
</dbReference>
<dbReference type="GO" id="GO:0006429">
    <property type="term" value="P:leucyl-tRNA aminoacylation"/>
    <property type="evidence" value="ECO:0007669"/>
    <property type="project" value="UniProtKB-UniRule"/>
</dbReference>
<dbReference type="CDD" id="cd07958">
    <property type="entry name" value="Anticodon_Ia_Leu_BEm"/>
    <property type="match status" value="1"/>
</dbReference>
<dbReference type="CDD" id="cd00812">
    <property type="entry name" value="LeuRS_core"/>
    <property type="match status" value="1"/>
</dbReference>
<dbReference type="FunFam" id="1.10.730.10:FF:000002">
    <property type="entry name" value="Leucine--tRNA ligase"/>
    <property type="match status" value="1"/>
</dbReference>
<dbReference type="FunFam" id="3.10.20.590:FF:000001">
    <property type="entry name" value="Leucine--tRNA ligase"/>
    <property type="match status" value="1"/>
</dbReference>
<dbReference type="FunFam" id="3.40.50.620:FF:000003">
    <property type="entry name" value="Leucine--tRNA ligase"/>
    <property type="match status" value="1"/>
</dbReference>
<dbReference type="FunFam" id="3.40.50.620:FF:000056">
    <property type="entry name" value="Leucine--tRNA ligase"/>
    <property type="match status" value="1"/>
</dbReference>
<dbReference type="Gene3D" id="2.20.28.290">
    <property type="match status" value="1"/>
</dbReference>
<dbReference type="Gene3D" id="3.10.20.590">
    <property type="match status" value="1"/>
</dbReference>
<dbReference type="Gene3D" id="3.40.50.620">
    <property type="entry name" value="HUPs"/>
    <property type="match status" value="2"/>
</dbReference>
<dbReference type="Gene3D" id="1.10.730.10">
    <property type="entry name" value="Isoleucyl-tRNA Synthetase, Domain 1"/>
    <property type="match status" value="1"/>
</dbReference>
<dbReference type="Gene3D" id="3.90.740.10">
    <property type="entry name" value="Valyl/Leucyl/Isoleucyl-tRNA synthetase, editing domain"/>
    <property type="match status" value="1"/>
</dbReference>
<dbReference type="HAMAP" id="MF_00049_B">
    <property type="entry name" value="Leu_tRNA_synth_B"/>
    <property type="match status" value="1"/>
</dbReference>
<dbReference type="InterPro" id="IPR001412">
    <property type="entry name" value="aa-tRNA-synth_I_CS"/>
</dbReference>
<dbReference type="InterPro" id="IPR002300">
    <property type="entry name" value="aa-tRNA-synth_Ia"/>
</dbReference>
<dbReference type="InterPro" id="IPR002302">
    <property type="entry name" value="Leu-tRNA-ligase"/>
</dbReference>
<dbReference type="InterPro" id="IPR025709">
    <property type="entry name" value="Leu_tRNA-synth_edit"/>
</dbReference>
<dbReference type="InterPro" id="IPR013155">
    <property type="entry name" value="M/V/L/I-tRNA-synth_anticd-bd"/>
</dbReference>
<dbReference type="InterPro" id="IPR015413">
    <property type="entry name" value="Methionyl/Leucyl_tRNA_Synth"/>
</dbReference>
<dbReference type="InterPro" id="IPR014729">
    <property type="entry name" value="Rossmann-like_a/b/a_fold"/>
</dbReference>
<dbReference type="InterPro" id="IPR009080">
    <property type="entry name" value="tRNAsynth_Ia_anticodon-bd"/>
</dbReference>
<dbReference type="InterPro" id="IPR009008">
    <property type="entry name" value="Val/Leu/Ile-tRNA-synth_edit"/>
</dbReference>
<dbReference type="NCBIfam" id="TIGR00396">
    <property type="entry name" value="leuS_bact"/>
    <property type="match status" value="1"/>
</dbReference>
<dbReference type="PANTHER" id="PTHR43740:SF2">
    <property type="entry name" value="LEUCINE--TRNA LIGASE, MITOCHONDRIAL"/>
    <property type="match status" value="1"/>
</dbReference>
<dbReference type="PANTHER" id="PTHR43740">
    <property type="entry name" value="LEUCYL-TRNA SYNTHETASE"/>
    <property type="match status" value="1"/>
</dbReference>
<dbReference type="Pfam" id="PF08264">
    <property type="entry name" value="Anticodon_1"/>
    <property type="match status" value="1"/>
</dbReference>
<dbReference type="Pfam" id="PF00133">
    <property type="entry name" value="tRNA-synt_1"/>
    <property type="match status" value="1"/>
</dbReference>
<dbReference type="Pfam" id="PF13603">
    <property type="entry name" value="tRNA-synt_1_2"/>
    <property type="match status" value="1"/>
</dbReference>
<dbReference type="Pfam" id="PF09334">
    <property type="entry name" value="tRNA-synt_1g"/>
    <property type="match status" value="1"/>
</dbReference>
<dbReference type="PRINTS" id="PR00985">
    <property type="entry name" value="TRNASYNTHLEU"/>
</dbReference>
<dbReference type="SUPFAM" id="SSF47323">
    <property type="entry name" value="Anticodon-binding domain of a subclass of class I aminoacyl-tRNA synthetases"/>
    <property type="match status" value="1"/>
</dbReference>
<dbReference type="SUPFAM" id="SSF52374">
    <property type="entry name" value="Nucleotidylyl transferase"/>
    <property type="match status" value="1"/>
</dbReference>
<dbReference type="SUPFAM" id="SSF50677">
    <property type="entry name" value="ValRS/IleRS/LeuRS editing domain"/>
    <property type="match status" value="1"/>
</dbReference>
<dbReference type="PROSITE" id="PS00178">
    <property type="entry name" value="AA_TRNA_LIGASE_I"/>
    <property type="match status" value="1"/>
</dbReference>
<name>SYL_BORPE</name>
<protein>
    <recommendedName>
        <fullName evidence="1">Leucine--tRNA ligase</fullName>
        <ecNumber evidence="1">6.1.1.4</ecNumber>
    </recommendedName>
    <alternativeName>
        <fullName evidence="1">Leucyl-tRNA synthetase</fullName>
        <shortName evidence="1">LeuRS</shortName>
    </alternativeName>
</protein>
<gene>
    <name evidence="1" type="primary">leuS</name>
    <name type="ordered locus">BP2044</name>
</gene>
<proteinExistence type="inferred from homology"/>
<evidence type="ECO:0000255" key="1">
    <source>
        <dbReference type="HAMAP-Rule" id="MF_00049"/>
    </source>
</evidence>
<organism>
    <name type="scientific">Bordetella pertussis (strain Tohama I / ATCC BAA-589 / NCTC 13251)</name>
    <dbReference type="NCBI Taxonomy" id="257313"/>
    <lineage>
        <taxon>Bacteria</taxon>
        <taxon>Pseudomonadati</taxon>
        <taxon>Pseudomonadota</taxon>
        <taxon>Betaproteobacteria</taxon>
        <taxon>Burkholderiales</taxon>
        <taxon>Alcaligenaceae</taxon>
        <taxon>Bordetella</taxon>
    </lineage>
</organism>
<feature type="chain" id="PRO_0000151982" description="Leucine--tRNA ligase">
    <location>
        <begin position="1"/>
        <end position="885"/>
    </location>
</feature>
<feature type="short sequence motif" description="'HIGH' region">
    <location>
        <begin position="48"/>
        <end position="58"/>
    </location>
</feature>
<feature type="short sequence motif" description="'KMSKS' region">
    <location>
        <begin position="639"/>
        <end position="643"/>
    </location>
</feature>
<feature type="binding site" evidence="1">
    <location>
        <position position="642"/>
    </location>
    <ligand>
        <name>ATP</name>
        <dbReference type="ChEBI" id="CHEBI:30616"/>
    </ligand>
</feature>
<accession>Q7VWY7</accession>
<sequence>MQERYQPNSVEAAAQQTWQARDAYLVHEHAKNPDGSEKPKFYACSMLPYPSGKLHMGHVRNYTINDMMARQLRMRGYNVLMPMGWDAFGMPAENAAIKSKVPPAKWTYDNIAYMKKQMKAMGLAIDWSREMCACDPKYYKWNQWLFLKMLEKGIAYRKTQVVNWDPVDQTVLANEQVIDGRGWRSGAPVEKREIPGYYLRITDYAEELLDQVSTNLPGWPERVRLMQENWIGKSEGLRFAFPHRIAGADGKLIQDGKLYVFTTRADTIMGVTFCAVAPEHPLATHAAQSNPALAAFVEQCKLGGTTEAEMATREKEGMPTGLTVTHPLTGAEIDVWVGNYVLMTYGDGAVMGVPAHDERDFAFARKYGLPIRQVVALEGKTYSTDAWQEWYGDKQAGRTVNSGKYDGLAYQAAVDAIAADLAAQGVGEKQTTWRLRDWGISRQRYWGTPIPIIHCADCGPVPVPEQDLPVVLPDDLIPDGSGNPLAKNEAFLSCSCPRCGKPARRETDTMDTFVDSSWYFMRYTSPDNDQAMVDARNDYWMPMDQYIGGIEHAVLHLLYARFWTKVMRDLGLLNFDEPFTKLLCQGMVLNHIYSRKTPQGGIEYFWPEEVDNVYDAKGAIVGAKLQRDGSEVNYGGVGTMSKSKNNGVDPQSLIDTLGADTARLFVMFASPPEQTLEWSDSGVEGANRFLRRLWALGYAQREAVGRGLATGADWAQAPAPVKELRREVYGLLKQADYDYQRIQYNTVVSACMKMLNAIDDAPLPEGPAADAARAETLGLLLRVLYPVVPHITWHLWQDLGYAEHLGDLLDAPWPHVDEAALVADEIELMLQVNGKLRGSIRVAAKAPKEDIERIAAAQEEVARFLEGRPPKRVIVVPGKLVNVVG</sequence>
<keyword id="KW-0030">Aminoacyl-tRNA synthetase</keyword>
<keyword id="KW-0067">ATP-binding</keyword>
<keyword id="KW-0963">Cytoplasm</keyword>
<keyword id="KW-0436">Ligase</keyword>
<keyword id="KW-0547">Nucleotide-binding</keyword>
<keyword id="KW-0648">Protein biosynthesis</keyword>
<keyword id="KW-1185">Reference proteome</keyword>